<feature type="signal peptide" evidence="2">
    <location>
        <begin position="1"/>
        <end position="17"/>
    </location>
</feature>
<feature type="chain" id="PRO_0000432782" description="Cell wall mannoprotein 1" evidence="2">
    <location>
        <begin position="18"/>
        <end position="273"/>
    </location>
</feature>
<feature type="region of interest" description="Disordered" evidence="3">
    <location>
        <begin position="173"/>
        <end position="247"/>
    </location>
</feature>
<feature type="compositionally biased region" description="Low complexity" evidence="3">
    <location>
        <begin position="177"/>
        <end position="247"/>
    </location>
</feature>
<reference key="1">
    <citation type="journal article" date="2003" name="J. Clin. Microbiol.">
        <title>AFLMP1 encodes an antigenic cell wall protein in Aspergillus flavus.</title>
        <authorList>
            <person name="Woo P.C."/>
            <person name="Chong K.T."/>
            <person name="Leung A.S."/>
            <person name="Wong S.S."/>
            <person name="Lau S.K."/>
            <person name="Yuen K.Y."/>
        </authorList>
    </citation>
    <scope>NUCLEOTIDE SEQUENCE [MRNA]</scope>
    <scope>FUNCTION</scope>
    <scope>SUBCELLULAR LOCATION</scope>
    <scope>BIOTECHNOLOGY</scope>
</reference>
<protein>
    <recommendedName>
        <fullName evidence="5">Cell wall mannoprotein 1</fullName>
    </recommendedName>
</protein>
<accession>Q8TG42</accession>
<organism>
    <name type="scientific">Aspergillus flavus</name>
    <dbReference type="NCBI Taxonomy" id="5059"/>
    <lineage>
        <taxon>Eukaryota</taxon>
        <taxon>Fungi</taxon>
        <taxon>Dikarya</taxon>
        <taxon>Ascomycota</taxon>
        <taxon>Pezizomycotina</taxon>
        <taxon>Eurotiomycetes</taxon>
        <taxon>Eurotiomycetidae</taxon>
        <taxon>Eurotiales</taxon>
        <taxon>Aspergillaceae</taxon>
        <taxon>Aspergillus</taxon>
        <taxon>Aspergillus subgen. Circumdati</taxon>
    </lineage>
</organism>
<name>MP1_ASPFL</name>
<sequence>MRFSAIFTLGLAGTALATPLVERAGSSPTDIISGISDKTDALDSAIKAYNGGDPSKVESASADLISTITKGTDAIKSGDDISTTDALALPEPVQALTKKVEQAIDDIIAKKDKFVEAGAGGKVKDSLNQQKSAADGLASAITSKVPESLKEIAQSLSAGISTAIQKGVDAYKDVSDSAPSSSAGSSASATATGSASETGSASTTGSASATSSSVIPTSSGAASSSAAPSGSSTPTGSGSASATSPPLATGAANKATIGYSLGAVAMAAIAVAV</sequence>
<gene>
    <name evidence="5" type="primary">mp1</name>
</gene>
<evidence type="ECO:0000250" key="1">
    <source>
        <dbReference type="UniProtKB" id="Q9HFP8"/>
    </source>
</evidence>
<evidence type="ECO:0000255" key="2"/>
<evidence type="ECO:0000256" key="3">
    <source>
        <dbReference type="SAM" id="MobiDB-lite"/>
    </source>
</evidence>
<evidence type="ECO:0000269" key="4">
    <source>
    </source>
</evidence>
<evidence type="ECO:0000303" key="5">
    <source>
    </source>
</evidence>
<evidence type="ECO:0000305" key="6"/>
<evidence type="ECO:0000305" key="7">
    <source>
    </source>
</evidence>
<dbReference type="EMBL" id="AF461762">
    <property type="protein sequence ID" value="AAL95714.1"/>
    <property type="molecule type" value="mRNA"/>
</dbReference>
<dbReference type="SMR" id="Q8TG42"/>
<dbReference type="EnsemblFungi" id="EED52239">
    <property type="protein sequence ID" value="EED52239"/>
    <property type="gene ID" value="AFLA_039410"/>
</dbReference>
<dbReference type="VEuPathDB" id="FungiDB:AFLA_007488"/>
<dbReference type="VEuPathDB" id="FungiDB:F9C07_2280513"/>
<dbReference type="OMA" id="HSHEMTA"/>
<dbReference type="OrthoDB" id="2422134at2759"/>
<dbReference type="GO" id="GO:0005576">
    <property type="term" value="C:extracellular region"/>
    <property type="evidence" value="ECO:0007669"/>
    <property type="project" value="UniProtKB-KW"/>
</dbReference>
<dbReference type="GO" id="GO:0008289">
    <property type="term" value="F:lipid binding"/>
    <property type="evidence" value="ECO:0007669"/>
    <property type="project" value="UniProtKB-KW"/>
</dbReference>
<dbReference type="FunFam" id="1.20.1280.140:FF:000001">
    <property type="entry name" value="Cell wall serine-threonine-rich galactomannoprotein Mp1"/>
    <property type="match status" value="1"/>
</dbReference>
<dbReference type="Gene3D" id="1.20.1280.140">
    <property type="match status" value="1"/>
</dbReference>
<dbReference type="InterPro" id="IPR021054">
    <property type="entry name" value="Cell_wall_mannoprotein_1"/>
</dbReference>
<dbReference type="PANTHER" id="PTHR38123">
    <property type="entry name" value="CELL WALL SERINE-THREONINE-RICH GALACTOMANNOPROTEIN MP1 (AFU_ORTHOLOGUE AFUA_4G03240)"/>
    <property type="match status" value="1"/>
</dbReference>
<dbReference type="PANTHER" id="PTHR38123:SF6">
    <property type="entry name" value="CELL WALL SERINE-THREONINE-RICH GALACTOMANNOPROTEIN MP1 (AFU_ORTHOLOGUE AFUA_4G03240)"/>
    <property type="match status" value="1"/>
</dbReference>
<dbReference type="Pfam" id="PF12296">
    <property type="entry name" value="HsbA"/>
    <property type="match status" value="1"/>
</dbReference>
<proteinExistence type="evidence at transcript level"/>
<keyword id="KW-0134">Cell wall</keyword>
<keyword id="KW-0446">Lipid-binding</keyword>
<keyword id="KW-0964">Secreted</keyword>
<keyword id="KW-0732">Signal</keyword>
<comment type="function">
    <text evidence="1 4">Constitutive protein of the cell wall (By similarity). Antigen target of host humoral immune response.</text>
</comment>
<comment type="subcellular location">
    <subcellularLocation>
        <location evidence="4">Secreted</location>
        <location evidence="4">Cell wall</location>
    </subcellularLocation>
    <text evidence="4">Localizes on the surface of the hyphae.</text>
</comment>
<comment type="PTM">
    <text evidence="1">Galactomannoprotein, glycosylated.</text>
</comment>
<comment type="biotechnology">
    <text evidence="7">May be useful for serodiagnosis in patients with aspergilloma or invasive aspergillosis.</text>
</comment>
<comment type="similarity">
    <text evidence="6">Belongs to the cell wall mannoprotein 1 family.</text>
</comment>